<comment type="catalytic activity">
    <reaction evidence="1">
        <text>tRNA(Gln) + L-glutamine + ATP = L-glutaminyl-tRNA(Gln) + AMP + diphosphate</text>
        <dbReference type="Rhea" id="RHEA:20121"/>
        <dbReference type="Rhea" id="RHEA-COMP:9662"/>
        <dbReference type="Rhea" id="RHEA-COMP:9681"/>
        <dbReference type="ChEBI" id="CHEBI:30616"/>
        <dbReference type="ChEBI" id="CHEBI:33019"/>
        <dbReference type="ChEBI" id="CHEBI:58359"/>
        <dbReference type="ChEBI" id="CHEBI:78442"/>
        <dbReference type="ChEBI" id="CHEBI:78521"/>
        <dbReference type="ChEBI" id="CHEBI:456215"/>
        <dbReference type="EC" id="6.1.1.18"/>
    </reaction>
</comment>
<comment type="subunit">
    <text evidence="1">Monomer.</text>
</comment>
<comment type="subcellular location">
    <subcellularLocation>
        <location evidence="1">Cytoplasm</location>
    </subcellularLocation>
</comment>
<comment type="similarity">
    <text evidence="1">Belongs to the class-I aminoacyl-tRNA synthetase family.</text>
</comment>
<name>SYQ_YERPA</name>
<organism>
    <name type="scientific">Yersinia pestis bv. Antiqua (strain Antiqua)</name>
    <dbReference type="NCBI Taxonomy" id="360102"/>
    <lineage>
        <taxon>Bacteria</taxon>
        <taxon>Pseudomonadati</taxon>
        <taxon>Pseudomonadota</taxon>
        <taxon>Gammaproteobacteria</taxon>
        <taxon>Enterobacterales</taxon>
        <taxon>Yersiniaceae</taxon>
        <taxon>Yersinia</taxon>
    </lineage>
</organism>
<accession>Q1C540</accession>
<evidence type="ECO:0000255" key="1">
    <source>
        <dbReference type="HAMAP-Rule" id="MF_00126"/>
    </source>
</evidence>
<feature type="chain" id="PRO_1000016301" description="Glutamine--tRNA ligase">
    <location>
        <begin position="1"/>
        <end position="555"/>
    </location>
</feature>
<feature type="short sequence motif" description="'HIGH' region" evidence="1">
    <location>
        <begin position="34"/>
        <end position="44"/>
    </location>
</feature>
<feature type="short sequence motif" description="'KMSKS' region" evidence="1">
    <location>
        <begin position="268"/>
        <end position="272"/>
    </location>
</feature>
<feature type="binding site" evidence="1">
    <location>
        <begin position="35"/>
        <end position="37"/>
    </location>
    <ligand>
        <name>ATP</name>
        <dbReference type="ChEBI" id="CHEBI:30616"/>
    </ligand>
</feature>
<feature type="binding site" evidence="1">
    <location>
        <begin position="41"/>
        <end position="47"/>
    </location>
    <ligand>
        <name>ATP</name>
        <dbReference type="ChEBI" id="CHEBI:30616"/>
    </ligand>
</feature>
<feature type="binding site" evidence="1">
    <location>
        <position position="67"/>
    </location>
    <ligand>
        <name>L-glutamine</name>
        <dbReference type="ChEBI" id="CHEBI:58359"/>
    </ligand>
</feature>
<feature type="binding site" evidence="1">
    <location>
        <position position="212"/>
    </location>
    <ligand>
        <name>L-glutamine</name>
        <dbReference type="ChEBI" id="CHEBI:58359"/>
    </ligand>
</feature>
<feature type="binding site" evidence="1">
    <location>
        <position position="231"/>
    </location>
    <ligand>
        <name>ATP</name>
        <dbReference type="ChEBI" id="CHEBI:30616"/>
    </ligand>
</feature>
<feature type="binding site" evidence="1">
    <location>
        <begin position="261"/>
        <end position="262"/>
    </location>
    <ligand>
        <name>ATP</name>
        <dbReference type="ChEBI" id="CHEBI:30616"/>
    </ligand>
</feature>
<feature type="binding site" evidence="1">
    <location>
        <begin position="269"/>
        <end position="271"/>
    </location>
    <ligand>
        <name>ATP</name>
        <dbReference type="ChEBI" id="CHEBI:30616"/>
    </ligand>
</feature>
<proteinExistence type="inferred from homology"/>
<dbReference type="EC" id="6.1.1.18" evidence="1"/>
<dbReference type="EMBL" id="CP000308">
    <property type="protein sequence ID" value="ABG14432.1"/>
    <property type="molecule type" value="Genomic_DNA"/>
</dbReference>
<dbReference type="RefSeq" id="WP_002210354.1">
    <property type="nucleotide sequence ID" value="NZ_CP009906.1"/>
</dbReference>
<dbReference type="SMR" id="Q1C540"/>
<dbReference type="GeneID" id="57976061"/>
<dbReference type="KEGG" id="ypa:YPA_2467"/>
<dbReference type="Proteomes" id="UP000001971">
    <property type="component" value="Chromosome"/>
</dbReference>
<dbReference type="GO" id="GO:0005829">
    <property type="term" value="C:cytosol"/>
    <property type="evidence" value="ECO:0007669"/>
    <property type="project" value="TreeGrafter"/>
</dbReference>
<dbReference type="GO" id="GO:0005524">
    <property type="term" value="F:ATP binding"/>
    <property type="evidence" value="ECO:0007669"/>
    <property type="project" value="UniProtKB-UniRule"/>
</dbReference>
<dbReference type="GO" id="GO:0004819">
    <property type="term" value="F:glutamine-tRNA ligase activity"/>
    <property type="evidence" value="ECO:0007669"/>
    <property type="project" value="UniProtKB-UniRule"/>
</dbReference>
<dbReference type="GO" id="GO:0006425">
    <property type="term" value="P:glutaminyl-tRNA aminoacylation"/>
    <property type="evidence" value="ECO:0007669"/>
    <property type="project" value="InterPro"/>
</dbReference>
<dbReference type="GO" id="GO:0006424">
    <property type="term" value="P:glutamyl-tRNA aminoacylation"/>
    <property type="evidence" value="ECO:0007669"/>
    <property type="project" value="UniProtKB-UniRule"/>
</dbReference>
<dbReference type="CDD" id="cd00807">
    <property type="entry name" value="GlnRS_core"/>
    <property type="match status" value="1"/>
</dbReference>
<dbReference type="FunFam" id="1.10.1160.10:FF:000001">
    <property type="entry name" value="Glutamine--tRNA ligase"/>
    <property type="match status" value="1"/>
</dbReference>
<dbReference type="FunFam" id="2.40.240.10:FF:000001">
    <property type="entry name" value="Glutamine--tRNA ligase"/>
    <property type="match status" value="1"/>
</dbReference>
<dbReference type="FunFam" id="2.40.240.10:FF:000003">
    <property type="entry name" value="Glutamine--tRNA ligase"/>
    <property type="match status" value="1"/>
</dbReference>
<dbReference type="FunFam" id="3.90.800.10:FF:000001">
    <property type="entry name" value="Glutamine--tRNA ligase"/>
    <property type="match status" value="1"/>
</dbReference>
<dbReference type="FunFam" id="3.40.50.620:FF:000037">
    <property type="entry name" value="Glutamine--tRNA ligase cytoplasmic"/>
    <property type="match status" value="1"/>
</dbReference>
<dbReference type="Gene3D" id="1.10.1160.10">
    <property type="entry name" value="Glutamyl-trna Synthetase, Domain 2"/>
    <property type="match status" value="1"/>
</dbReference>
<dbReference type="Gene3D" id="3.90.800.10">
    <property type="entry name" value="Glutamyl-tRNA Synthetase, Domain 3"/>
    <property type="match status" value="1"/>
</dbReference>
<dbReference type="Gene3D" id="3.40.50.620">
    <property type="entry name" value="HUPs"/>
    <property type="match status" value="1"/>
</dbReference>
<dbReference type="Gene3D" id="2.40.240.10">
    <property type="entry name" value="Ribosomal Protein L25, Chain P"/>
    <property type="match status" value="2"/>
</dbReference>
<dbReference type="HAMAP" id="MF_00126">
    <property type="entry name" value="Gln_tRNA_synth"/>
    <property type="match status" value="1"/>
</dbReference>
<dbReference type="InterPro" id="IPR001412">
    <property type="entry name" value="aa-tRNA-synth_I_CS"/>
</dbReference>
<dbReference type="InterPro" id="IPR004514">
    <property type="entry name" value="Gln-tRNA-synth"/>
</dbReference>
<dbReference type="InterPro" id="IPR050132">
    <property type="entry name" value="Gln/Glu-tRNA_Ligase"/>
</dbReference>
<dbReference type="InterPro" id="IPR022861">
    <property type="entry name" value="Gln_tRNA_ligase_bac"/>
</dbReference>
<dbReference type="InterPro" id="IPR000924">
    <property type="entry name" value="Glu/Gln-tRNA-synth"/>
</dbReference>
<dbReference type="InterPro" id="IPR020058">
    <property type="entry name" value="Glu/Gln-tRNA-synth_Ib_cat-dom"/>
</dbReference>
<dbReference type="InterPro" id="IPR020059">
    <property type="entry name" value="Glu/Gln-tRNA-synth_Ib_codon-bd"/>
</dbReference>
<dbReference type="InterPro" id="IPR020061">
    <property type="entry name" value="Glu_tRNA_lig_a-bdl"/>
</dbReference>
<dbReference type="InterPro" id="IPR020056">
    <property type="entry name" value="Rbsml_bL25/Gln-tRNA_synth_N"/>
</dbReference>
<dbReference type="InterPro" id="IPR011035">
    <property type="entry name" value="Ribosomal_bL25/Gln-tRNA_synth"/>
</dbReference>
<dbReference type="InterPro" id="IPR014729">
    <property type="entry name" value="Rossmann-like_a/b/a_fold"/>
</dbReference>
<dbReference type="InterPro" id="IPR049437">
    <property type="entry name" value="tRNA-synt_1c_C2"/>
</dbReference>
<dbReference type="NCBIfam" id="TIGR00440">
    <property type="entry name" value="glnS"/>
    <property type="match status" value="1"/>
</dbReference>
<dbReference type="NCBIfam" id="NF011291">
    <property type="entry name" value="PRK14703.1"/>
    <property type="match status" value="1"/>
</dbReference>
<dbReference type="PANTHER" id="PTHR43097:SF5">
    <property type="entry name" value="GLUTAMATE--TRNA LIGASE"/>
    <property type="match status" value="1"/>
</dbReference>
<dbReference type="PANTHER" id="PTHR43097">
    <property type="entry name" value="GLUTAMINE-TRNA LIGASE"/>
    <property type="match status" value="1"/>
</dbReference>
<dbReference type="Pfam" id="PF00749">
    <property type="entry name" value="tRNA-synt_1c"/>
    <property type="match status" value="1"/>
</dbReference>
<dbReference type="Pfam" id="PF03950">
    <property type="entry name" value="tRNA-synt_1c_C"/>
    <property type="match status" value="1"/>
</dbReference>
<dbReference type="Pfam" id="PF20974">
    <property type="entry name" value="tRNA-synt_1c_C2"/>
    <property type="match status" value="1"/>
</dbReference>
<dbReference type="PRINTS" id="PR00987">
    <property type="entry name" value="TRNASYNTHGLU"/>
</dbReference>
<dbReference type="SUPFAM" id="SSF52374">
    <property type="entry name" value="Nucleotidylyl transferase"/>
    <property type="match status" value="1"/>
</dbReference>
<dbReference type="SUPFAM" id="SSF50715">
    <property type="entry name" value="Ribosomal protein L25-like"/>
    <property type="match status" value="1"/>
</dbReference>
<dbReference type="PROSITE" id="PS00178">
    <property type="entry name" value="AA_TRNA_LIGASE_I"/>
    <property type="match status" value="1"/>
</dbReference>
<gene>
    <name evidence="1" type="primary">glnS</name>
    <name type="ordered locus">YPA_2467</name>
</gene>
<reference key="1">
    <citation type="journal article" date="2006" name="J. Bacteriol.">
        <title>Complete genome sequence of Yersinia pestis strains Antiqua and Nepal516: evidence of gene reduction in an emerging pathogen.</title>
        <authorList>
            <person name="Chain P.S.G."/>
            <person name="Hu P."/>
            <person name="Malfatti S.A."/>
            <person name="Radnedge L."/>
            <person name="Larimer F."/>
            <person name="Vergez L.M."/>
            <person name="Worsham P."/>
            <person name="Chu M.C."/>
            <person name="Andersen G.L."/>
        </authorList>
    </citation>
    <scope>NUCLEOTIDE SEQUENCE [LARGE SCALE GENOMIC DNA]</scope>
    <source>
        <strain>Antiqua</strain>
    </source>
</reference>
<keyword id="KW-0030">Aminoacyl-tRNA synthetase</keyword>
<keyword id="KW-0067">ATP-binding</keyword>
<keyword id="KW-0963">Cytoplasm</keyword>
<keyword id="KW-0436">Ligase</keyword>
<keyword id="KW-0547">Nucleotide-binding</keyword>
<keyword id="KW-0648">Protein biosynthesis</keyword>
<sequence length="555" mass="63751">MSEAEARPSNFIRQIIDEDLASGKHTSVHTRFPPEPNGYLHIGHAKSICLNFGIAEDYQGQCNLRFDDTNPVKEDVEFVESIKRDVEWLGFTWSGDVRYSSDYFDQLYQYAVELINKGLAYVDELTPEQMREYRGTLTAPGKNSPYRDRSVEENLALFEKMRAGGFAEGTACLRAKIDMASPFIVMRDPVLYRIKFAEHHQSGNKWCIYPMYDFTHCISDALEGITHSLCTLEFQDNRRLYDWVLDNISIDCHPRQYEFSRLNLEYTIMSKRKLNQLVTEKVVEGWDDPRMPTISGLRRRGYTAASIREFCRRIGVTKQDNNVEMMSLESCIRDDLNEHAPRAMAVLDPIKVVIENRAAGEEWLTMPNHPNNPEMGSRQVPFDSEIYIDRADFREEANKQYKRLVLGKEVRLRNAYVIKAERVEKDAEGNVTTLYCSYDAETLNKDPADGRKVKGVIHWVSVAHALPAEIRLYDRLFNVPNPAAAEDFLSTINPESLVIRQGFVEPSLADAVSDKTYQFEREGYFCADSRYSRPGALVFNRTVGLRDTWAAKATQ</sequence>
<protein>
    <recommendedName>
        <fullName evidence="1">Glutamine--tRNA ligase</fullName>
        <ecNumber evidence="1">6.1.1.18</ecNumber>
    </recommendedName>
    <alternativeName>
        <fullName evidence="1">Glutaminyl-tRNA synthetase</fullName>
        <shortName evidence="1">GlnRS</shortName>
    </alternativeName>
</protein>